<name>AROE_PSYCK</name>
<protein>
    <recommendedName>
        <fullName evidence="1">Shikimate dehydrogenase (NADP(+))</fullName>
        <shortName evidence="1">SDH</shortName>
        <ecNumber evidence="1">1.1.1.25</ecNumber>
    </recommendedName>
</protein>
<organism>
    <name type="scientific">Psychrobacter cryohalolentis (strain ATCC BAA-1226 / DSM 17306 / VKM B-2378 / K5)</name>
    <dbReference type="NCBI Taxonomy" id="335284"/>
    <lineage>
        <taxon>Bacteria</taxon>
        <taxon>Pseudomonadati</taxon>
        <taxon>Pseudomonadota</taxon>
        <taxon>Gammaproteobacteria</taxon>
        <taxon>Moraxellales</taxon>
        <taxon>Moraxellaceae</taxon>
        <taxon>Psychrobacter</taxon>
    </lineage>
</organism>
<dbReference type="EC" id="1.1.1.25" evidence="1"/>
<dbReference type="EMBL" id="CP000323">
    <property type="protein sequence ID" value="ABE73934.1"/>
    <property type="molecule type" value="Genomic_DNA"/>
</dbReference>
<dbReference type="RefSeq" id="WP_011512524.1">
    <property type="nucleotide sequence ID" value="NC_007969.1"/>
</dbReference>
<dbReference type="SMR" id="Q1QEG9"/>
<dbReference type="STRING" id="335284.Pcryo_0150"/>
<dbReference type="KEGG" id="pcr:Pcryo_0150"/>
<dbReference type="eggNOG" id="COG0169">
    <property type="taxonomic scope" value="Bacteria"/>
</dbReference>
<dbReference type="HOGENOM" id="CLU_044063_2_1_6"/>
<dbReference type="UniPathway" id="UPA00053">
    <property type="reaction ID" value="UER00087"/>
</dbReference>
<dbReference type="Proteomes" id="UP000002425">
    <property type="component" value="Chromosome"/>
</dbReference>
<dbReference type="GO" id="GO:0005829">
    <property type="term" value="C:cytosol"/>
    <property type="evidence" value="ECO:0007669"/>
    <property type="project" value="TreeGrafter"/>
</dbReference>
<dbReference type="GO" id="GO:0050661">
    <property type="term" value="F:NADP binding"/>
    <property type="evidence" value="ECO:0007669"/>
    <property type="project" value="InterPro"/>
</dbReference>
<dbReference type="GO" id="GO:0004764">
    <property type="term" value="F:shikimate 3-dehydrogenase (NADP+) activity"/>
    <property type="evidence" value="ECO:0007669"/>
    <property type="project" value="UniProtKB-UniRule"/>
</dbReference>
<dbReference type="GO" id="GO:0008652">
    <property type="term" value="P:amino acid biosynthetic process"/>
    <property type="evidence" value="ECO:0007669"/>
    <property type="project" value="UniProtKB-KW"/>
</dbReference>
<dbReference type="GO" id="GO:0009073">
    <property type="term" value="P:aromatic amino acid family biosynthetic process"/>
    <property type="evidence" value="ECO:0007669"/>
    <property type="project" value="UniProtKB-KW"/>
</dbReference>
<dbReference type="GO" id="GO:0009423">
    <property type="term" value="P:chorismate biosynthetic process"/>
    <property type="evidence" value="ECO:0007669"/>
    <property type="project" value="UniProtKB-UniRule"/>
</dbReference>
<dbReference type="GO" id="GO:0019632">
    <property type="term" value="P:shikimate metabolic process"/>
    <property type="evidence" value="ECO:0007669"/>
    <property type="project" value="InterPro"/>
</dbReference>
<dbReference type="CDD" id="cd01065">
    <property type="entry name" value="NAD_bind_Shikimate_DH"/>
    <property type="match status" value="1"/>
</dbReference>
<dbReference type="Gene3D" id="3.40.50.10860">
    <property type="entry name" value="Leucine Dehydrogenase, chain A, domain 1"/>
    <property type="match status" value="1"/>
</dbReference>
<dbReference type="Gene3D" id="3.40.50.720">
    <property type="entry name" value="NAD(P)-binding Rossmann-like Domain"/>
    <property type="match status" value="1"/>
</dbReference>
<dbReference type="HAMAP" id="MF_00222">
    <property type="entry name" value="Shikimate_DH_AroE"/>
    <property type="match status" value="1"/>
</dbReference>
<dbReference type="InterPro" id="IPR046346">
    <property type="entry name" value="Aminoacid_DH-like_N_sf"/>
</dbReference>
<dbReference type="InterPro" id="IPR036291">
    <property type="entry name" value="NAD(P)-bd_dom_sf"/>
</dbReference>
<dbReference type="InterPro" id="IPR041121">
    <property type="entry name" value="SDH_C"/>
</dbReference>
<dbReference type="InterPro" id="IPR011342">
    <property type="entry name" value="Shikimate_DH"/>
</dbReference>
<dbReference type="InterPro" id="IPR013708">
    <property type="entry name" value="Shikimate_DH-bd_N"/>
</dbReference>
<dbReference type="InterPro" id="IPR022893">
    <property type="entry name" value="Shikimate_DH_fam"/>
</dbReference>
<dbReference type="InterPro" id="IPR006151">
    <property type="entry name" value="Shikm_DH/Glu-tRNA_Rdtase"/>
</dbReference>
<dbReference type="NCBIfam" id="TIGR00507">
    <property type="entry name" value="aroE"/>
    <property type="match status" value="1"/>
</dbReference>
<dbReference type="NCBIfam" id="NF001310">
    <property type="entry name" value="PRK00258.1-2"/>
    <property type="match status" value="1"/>
</dbReference>
<dbReference type="PANTHER" id="PTHR21089:SF1">
    <property type="entry name" value="BIFUNCTIONAL 3-DEHYDROQUINATE DEHYDRATASE_SHIKIMATE DEHYDROGENASE, CHLOROPLASTIC"/>
    <property type="match status" value="1"/>
</dbReference>
<dbReference type="PANTHER" id="PTHR21089">
    <property type="entry name" value="SHIKIMATE DEHYDROGENASE"/>
    <property type="match status" value="1"/>
</dbReference>
<dbReference type="Pfam" id="PF18317">
    <property type="entry name" value="SDH_C"/>
    <property type="match status" value="1"/>
</dbReference>
<dbReference type="Pfam" id="PF01488">
    <property type="entry name" value="Shikimate_DH"/>
    <property type="match status" value="1"/>
</dbReference>
<dbReference type="Pfam" id="PF08501">
    <property type="entry name" value="Shikimate_dh_N"/>
    <property type="match status" value="1"/>
</dbReference>
<dbReference type="SUPFAM" id="SSF53223">
    <property type="entry name" value="Aminoacid dehydrogenase-like, N-terminal domain"/>
    <property type="match status" value="1"/>
</dbReference>
<dbReference type="SUPFAM" id="SSF51735">
    <property type="entry name" value="NAD(P)-binding Rossmann-fold domains"/>
    <property type="match status" value="1"/>
</dbReference>
<reference key="1">
    <citation type="submission" date="2006-03" db="EMBL/GenBank/DDBJ databases">
        <title>Complete sequence of chromosome of Psychrobacter cryohalolentis K5.</title>
        <authorList>
            <consortium name="US DOE Joint Genome Institute"/>
            <person name="Copeland A."/>
            <person name="Lucas S."/>
            <person name="Lapidus A."/>
            <person name="Barry K."/>
            <person name="Detter J.C."/>
            <person name="Glavina T."/>
            <person name="Hammon N."/>
            <person name="Israni S."/>
            <person name="Dalin E."/>
            <person name="Tice H."/>
            <person name="Pitluck S."/>
            <person name="Brettin T."/>
            <person name="Bruce D."/>
            <person name="Han C."/>
            <person name="Tapia R."/>
            <person name="Sims D.R."/>
            <person name="Gilna P."/>
            <person name="Schmutz J."/>
            <person name="Larimer F."/>
            <person name="Land M."/>
            <person name="Hauser L."/>
            <person name="Kyrpides N."/>
            <person name="Kim E."/>
            <person name="Richardson P."/>
        </authorList>
    </citation>
    <scope>NUCLEOTIDE SEQUENCE [LARGE SCALE GENOMIC DNA]</scope>
    <source>
        <strain>ATCC BAA-1226 / DSM 17306 / VKM B-2378 / K5</strain>
    </source>
</reference>
<comment type="function">
    <text evidence="1">Involved in the biosynthesis of the chorismate, which leads to the biosynthesis of aromatic amino acids. Catalyzes the reversible NADPH linked reduction of 3-dehydroshikimate (DHSA) to yield shikimate (SA).</text>
</comment>
<comment type="catalytic activity">
    <reaction evidence="1">
        <text>shikimate + NADP(+) = 3-dehydroshikimate + NADPH + H(+)</text>
        <dbReference type="Rhea" id="RHEA:17737"/>
        <dbReference type="ChEBI" id="CHEBI:15378"/>
        <dbReference type="ChEBI" id="CHEBI:16630"/>
        <dbReference type="ChEBI" id="CHEBI:36208"/>
        <dbReference type="ChEBI" id="CHEBI:57783"/>
        <dbReference type="ChEBI" id="CHEBI:58349"/>
        <dbReference type="EC" id="1.1.1.25"/>
    </reaction>
</comment>
<comment type="pathway">
    <text evidence="1">Metabolic intermediate biosynthesis; chorismate biosynthesis; chorismate from D-erythrose 4-phosphate and phosphoenolpyruvate: step 4/7.</text>
</comment>
<comment type="subunit">
    <text evidence="1">Homodimer.</text>
</comment>
<comment type="similarity">
    <text evidence="1">Belongs to the shikimate dehydrogenase family.</text>
</comment>
<accession>Q1QEG9</accession>
<gene>
    <name evidence="1" type="primary">aroE</name>
    <name type="ordered locus">Pcryo_0150</name>
</gene>
<feature type="chain" id="PRO_0000325153" description="Shikimate dehydrogenase (NADP(+))">
    <location>
        <begin position="1"/>
        <end position="288"/>
    </location>
</feature>
<feature type="active site" description="Proton acceptor" evidence="1">
    <location>
        <position position="68"/>
    </location>
</feature>
<feature type="binding site" evidence="1">
    <location>
        <begin position="15"/>
        <end position="17"/>
    </location>
    <ligand>
        <name>shikimate</name>
        <dbReference type="ChEBI" id="CHEBI:36208"/>
    </ligand>
</feature>
<feature type="binding site" evidence="1">
    <location>
        <position position="64"/>
    </location>
    <ligand>
        <name>shikimate</name>
        <dbReference type="ChEBI" id="CHEBI:36208"/>
    </ligand>
</feature>
<feature type="binding site" evidence="1">
    <location>
        <position position="83"/>
    </location>
    <ligand>
        <name>NADP(+)</name>
        <dbReference type="ChEBI" id="CHEBI:58349"/>
    </ligand>
</feature>
<feature type="binding site" evidence="1">
    <location>
        <position position="92"/>
    </location>
    <ligand>
        <name>shikimate</name>
        <dbReference type="ChEBI" id="CHEBI:36208"/>
    </ligand>
</feature>
<feature type="binding site" evidence="1">
    <location>
        <position position="117"/>
    </location>
    <ligand>
        <name>shikimate</name>
        <dbReference type="ChEBI" id="CHEBI:36208"/>
    </ligand>
</feature>
<feature type="binding site" evidence="1">
    <location>
        <begin position="141"/>
        <end position="145"/>
    </location>
    <ligand>
        <name>NADP(+)</name>
        <dbReference type="ChEBI" id="CHEBI:58349"/>
    </ligand>
</feature>
<feature type="binding site" evidence="1">
    <location>
        <begin position="165"/>
        <end position="170"/>
    </location>
    <ligand>
        <name>NADP(+)</name>
        <dbReference type="ChEBI" id="CHEBI:58349"/>
    </ligand>
</feature>
<feature type="binding site" evidence="1">
    <location>
        <position position="232"/>
    </location>
    <ligand>
        <name>NADP(+)</name>
        <dbReference type="ChEBI" id="CHEBI:58349"/>
    </ligand>
</feature>
<feature type="binding site" evidence="1">
    <location>
        <position position="234"/>
    </location>
    <ligand>
        <name>shikimate</name>
        <dbReference type="ChEBI" id="CHEBI:36208"/>
    </ligand>
</feature>
<feature type="binding site" evidence="1">
    <location>
        <position position="254"/>
    </location>
    <ligand>
        <name>NADP(+)</name>
        <dbReference type="ChEBI" id="CHEBI:58349"/>
    </ligand>
</feature>
<sequence length="288" mass="30539">MTQHFIVIGNPIAHSKSPEIHTLFGTQAGLDICYQRQYCPDDAASFTAVIEAFFHGGGVGANVTVPFKQIAYECCAARGGLSEHAKVAGAVNTLLLNKALLAKGVPPVEALFGDNTDGQGLVNHMQRLGWPLNGARVAIIGAGGAARGVVLPLIEAGIETLSIANRTVSKAEILVDELSTASEKINQHTIQTYATADLSGDFDIIINATSIGLSGETLPLTDKLNCQYAYDMMYGRELPFLQHFSIRGAQTSDGYGMLIGQAALSFERWTGRAIDVAQATTALENVST</sequence>
<keyword id="KW-0028">Amino-acid biosynthesis</keyword>
<keyword id="KW-0057">Aromatic amino acid biosynthesis</keyword>
<keyword id="KW-0521">NADP</keyword>
<keyword id="KW-0560">Oxidoreductase</keyword>
<proteinExistence type="inferred from homology"/>
<evidence type="ECO:0000255" key="1">
    <source>
        <dbReference type="HAMAP-Rule" id="MF_00222"/>
    </source>
</evidence>